<sequence>MASQGTKRSYEQMETGGERQNATEIRASVGRMVGGIGRFYVQMCTELKLSDHEGRLIQNSITIERMVLSAFDERRNKYLEEHPSAGKDPKKTGGPIYRRRDGKWVRELILYDKEEIMRIWRQANNGEDATAGLTHLMIWHSNLNDTTYQRTRALVRTGMDPRMCSLMQGSTLPRRSGAAGAAVKGVGTMVMELIQMIKRGINDRNFWRGENGRRTRIAYERMCNILKGKFQTAAQRAMMDQVRESRNPGNAEIEDLIFLARSALILRGSVAHKSCLPACVYGLTVASGYDFEREGYSLIGIDPFKLLQNSQVFSLIRPNENPAHKSQLVWMACHSAAFEDLRVSNFIRGTKVVPRGQLATRGVQIASNENMETMDSCTLELRSRYWAIRTRSGGNTNQQRASAGQISVQPTFSVQRNLPFERATIMAAFTGNTEGRTSDMRTEIIRMMENARSEDVSFQGRGVFELSDEKATNPIVPSLDMSNEGSYFFGDNAEEYDN</sequence>
<accession>P16979</accession>
<reference key="1">
    <citation type="journal article" date="1989" name="Virology">
        <title>Two subtypes of nucleoproteins (NP) of influenza A viruses.</title>
        <authorList>
            <person name="Gammelin M."/>
            <person name="Mandler J."/>
            <person name="Scholtissek C."/>
        </authorList>
    </citation>
    <scope>NUCLEOTIDE SEQUENCE [GENOMIC RNA]</scope>
</reference>
<protein>
    <recommendedName>
        <fullName evidence="1">Nucleoprotein</fullName>
    </recommendedName>
    <alternativeName>
        <fullName evidence="1">Nucleocapsid protein</fullName>
        <shortName evidence="1">Protein N</shortName>
    </alternativeName>
</protein>
<keyword id="KW-0167">Capsid protein</keyword>
<keyword id="KW-1139">Helical capsid protein</keyword>
<keyword id="KW-1048">Host nucleus</keyword>
<keyword id="KW-0945">Host-virus interaction</keyword>
<keyword id="KW-0687">Ribonucleoprotein</keyword>
<keyword id="KW-0694">RNA-binding</keyword>
<keyword id="KW-0543">Viral nucleoprotein</keyword>
<keyword id="KW-1163">Viral penetration into host nucleus</keyword>
<keyword id="KW-0946">Virion</keyword>
<keyword id="KW-1160">Virus entry into host cell</keyword>
<comment type="function">
    <text evidence="1">Encapsidates the negative strand viral RNA, protecting it from nucleases. The encapsidated genomic RNA is termed the ribonucleoprotein (RNP) and serves as template for transcription and replication. The RNP needs to be localized in the host nucleus to start an infectious cycle, but is too large to diffuse through the nuclear pore complex. NP comprises at least 2 nuclear localization signals that are responsible for the active RNP import into the nucleus through cellular importin alpha/beta pathway. Later in the infection, nclear export of RNPs are mediated through viral proteins NEP interacting with M1 which binds nucleoproteins. It is possible that nucleoprotein binds directly host exportin-1/XPO1 and plays an active role in RNPs nuclear export. M1 interaction with RNP seems to hide nucleoprotein's nuclear localization signals. Soon after a virion infects a new cell, M1 dissociates from the RNP under acidification of the virion driven by M2 protein. Dissociation of M1 from RNP unmasks nucleoprotein's nuclear localization signals, targeting the RNP to the nucleus.</text>
</comment>
<comment type="subunit">
    <text evidence="1">Homomultimerizes to form the nucleocapsid. May bind host exportin-1/XPO1. Binds to viral genomic RNA. Protein-RNA contacts are mediated by a combination of electrostatic interactions between positively charged residues and the phosphate backbone and planar interactions between aromatic side chains and bases.</text>
</comment>
<comment type="subcellular location">
    <subcellularLocation>
        <location evidence="1">Virion</location>
    </subcellularLocation>
    <subcellularLocation>
        <location evidence="1">Host nucleus</location>
    </subcellularLocation>
</comment>
<comment type="PTM">
    <text evidence="1">Late in virus-infected cells, may be cleaved from a 56-kDa protein to a 53-kDa protein by a cellular caspase. This cleavage might be a marker for the onset of apoptosis in infected cells or have a specific function in virus host interaction.</text>
</comment>
<comment type="similarity">
    <text evidence="1">Belongs to the influenza viruses nucleoprotein family.</text>
</comment>
<organism>
    <name type="scientific">Influenza A virus (strain A/Equine/Miami/1/1963 H3N8)</name>
    <dbReference type="NCBI Taxonomy" id="387222"/>
    <lineage>
        <taxon>Viruses</taxon>
        <taxon>Riboviria</taxon>
        <taxon>Orthornavirae</taxon>
        <taxon>Negarnaviricota</taxon>
        <taxon>Polyploviricotina</taxon>
        <taxon>Insthoviricetes</taxon>
        <taxon>Articulavirales</taxon>
        <taxon>Orthomyxoviridae</taxon>
        <taxon>Alphainfluenzavirus</taxon>
        <taxon>Alphainfluenzavirus influenzae</taxon>
        <taxon>Influenza A virus</taxon>
    </lineage>
</organism>
<organismHost>
    <name type="scientific">Aves</name>
    <dbReference type="NCBI Taxonomy" id="8782"/>
</organismHost>
<organismHost>
    <name type="scientific">Equus caballus</name>
    <name type="common">Horse</name>
    <dbReference type="NCBI Taxonomy" id="9796"/>
</organismHost>
<dbReference type="EMBL" id="M22575">
    <property type="protein sequence ID" value="AAA43106.1"/>
    <property type="molecule type" value="Genomic_RNA"/>
</dbReference>
<dbReference type="SMR" id="P16979"/>
<dbReference type="GO" id="GO:0019029">
    <property type="term" value="C:helical viral capsid"/>
    <property type="evidence" value="ECO:0007669"/>
    <property type="project" value="UniProtKB-UniRule"/>
</dbReference>
<dbReference type="GO" id="GO:0043657">
    <property type="term" value="C:host cell"/>
    <property type="evidence" value="ECO:0007669"/>
    <property type="project" value="GOC"/>
</dbReference>
<dbReference type="GO" id="GO:0042025">
    <property type="term" value="C:host cell nucleus"/>
    <property type="evidence" value="ECO:0007669"/>
    <property type="project" value="UniProtKB-SubCell"/>
</dbReference>
<dbReference type="GO" id="GO:1990904">
    <property type="term" value="C:ribonucleoprotein complex"/>
    <property type="evidence" value="ECO:0007669"/>
    <property type="project" value="UniProtKB-KW"/>
</dbReference>
<dbReference type="GO" id="GO:0019013">
    <property type="term" value="C:viral nucleocapsid"/>
    <property type="evidence" value="ECO:0007669"/>
    <property type="project" value="UniProtKB-UniRule"/>
</dbReference>
<dbReference type="GO" id="GO:0003723">
    <property type="term" value="F:RNA binding"/>
    <property type="evidence" value="ECO:0007669"/>
    <property type="project" value="UniProtKB-UniRule"/>
</dbReference>
<dbReference type="GO" id="GO:0005198">
    <property type="term" value="F:structural molecule activity"/>
    <property type="evidence" value="ECO:0007669"/>
    <property type="project" value="UniProtKB-UniRule"/>
</dbReference>
<dbReference type="GO" id="GO:0046718">
    <property type="term" value="P:symbiont entry into host cell"/>
    <property type="evidence" value="ECO:0007669"/>
    <property type="project" value="UniProtKB-KW"/>
</dbReference>
<dbReference type="GO" id="GO:0075732">
    <property type="term" value="P:viral penetration into host nucleus"/>
    <property type="evidence" value="ECO:0007669"/>
    <property type="project" value="UniProtKB-UniRule"/>
</dbReference>
<dbReference type="HAMAP" id="MF_04070">
    <property type="entry name" value="INFV_NCAP"/>
    <property type="match status" value="1"/>
</dbReference>
<dbReference type="InterPro" id="IPR002141">
    <property type="entry name" value="Flu_NP"/>
</dbReference>
<dbReference type="Pfam" id="PF00506">
    <property type="entry name" value="Flu_NP"/>
    <property type="match status" value="1"/>
</dbReference>
<dbReference type="SUPFAM" id="SSF161003">
    <property type="entry name" value="flu NP-like"/>
    <property type="match status" value="1"/>
</dbReference>
<evidence type="ECO:0000255" key="1">
    <source>
        <dbReference type="HAMAP-Rule" id="MF_04070"/>
    </source>
</evidence>
<evidence type="ECO:0000256" key="2">
    <source>
        <dbReference type="SAM" id="MobiDB-lite"/>
    </source>
</evidence>
<gene>
    <name evidence="1" type="primary">NP</name>
</gene>
<name>NCAP_I63A2</name>
<feature type="chain" id="PRO_0000079063" description="Nucleoprotein">
    <location>
        <begin position="1"/>
        <end position="498"/>
    </location>
</feature>
<feature type="region of interest" description="Disordered" evidence="2">
    <location>
        <begin position="1"/>
        <end position="21"/>
    </location>
</feature>
<feature type="short sequence motif" description="Unconventional nuclear localization signal" evidence="1">
    <location>
        <begin position="1"/>
        <end position="18"/>
    </location>
</feature>
<feature type="short sequence motif" description="Bipartite nuclear localization signal" evidence="1">
    <location>
        <begin position="198"/>
        <end position="216"/>
    </location>
</feature>
<proteinExistence type="inferred from homology"/>